<organism>
    <name type="scientific">Archaeoglobus fulgidus (strain ATCC 49558 / DSM 4304 / JCM 9628 / NBRC 100126 / VC-16)</name>
    <dbReference type="NCBI Taxonomy" id="224325"/>
    <lineage>
        <taxon>Archaea</taxon>
        <taxon>Methanobacteriati</taxon>
        <taxon>Methanobacteriota</taxon>
        <taxon>Archaeoglobi</taxon>
        <taxon>Archaeoglobales</taxon>
        <taxon>Archaeoglobaceae</taxon>
        <taxon>Archaeoglobus</taxon>
    </lineage>
</organism>
<keyword id="KW-0002">3D-structure</keyword>
<keyword id="KW-0067">ATP-binding</keyword>
<keyword id="KW-1003">Cell membrane</keyword>
<keyword id="KW-0186">Copper</keyword>
<keyword id="KW-0187">Copper transport</keyword>
<keyword id="KW-0406">Ion transport</keyword>
<keyword id="KW-0460">Magnesium</keyword>
<keyword id="KW-0472">Membrane</keyword>
<keyword id="KW-0479">Metal-binding</keyword>
<keyword id="KW-0547">Nucleotide-binding</keyword>
<keyword id="KW-0597">Phosphoprotein</keyword>
<keyword id="KW-1185">Reference proteome</keyword>
<keyword id="KW-1278">Translocase</keyword>
<keyword id="KW-0812">Transmembrane</keyword>
<keyword id="KW-1133">Transmembrane helix</keyword>
<keyword id="KW-0813">Transport</keyword>
<evidence type="ECO:0000250" key="1"/>
<evidence type="ECO:0000255" key="2"/>
<evidence type="ECO:0000256" key="3">
    <source>
        <dbReference type="SAM" id="MobiDB-lite"/>
    </source>
</evidence>
<evidence type="ECO:0000269" key="4">
    <source>
    </source>
</evidence>
<evidence type="ECO:0000269" key="5">
    <source>
    </source>
</evidence>
<evidence type="ECO:0000269" key="6">
    <source>
    </source>
</evidence>
<evidence type="ECO:0000305" key="7"/>
<evidence type="ECO:0007829" key="8">
    <source>
        <dbReference type="PDB" id="3SKX"/>
    </source>
</evidence>
<comment type="function">
    <text evidence="5 6">Involved in copper export.</text>
</comment>
<comment type="catalytic activity">
    <reaction>
        <text>Cu(2+)(in) + ATP + H2O = Cu(2+)(out) + ADP + phosphate + H(+)</text>
        <dbReference type="Rhea" id="RHEA:10376"/>
        <dbReference type="ChEBI" id="CHEBI:15377"/>
        <dbReference type="ChEBI" id="CHEBI:15378"/>
        <dbReference type="ChEBI" id="CHEBI:29036"/>
        <dbReference type="ChEBI" id="CHEBI:30616"/>
        <dbReference type="ChEBI" id="CHEBI:43474"/>
        <dbReference type="ChEBI" id="CHEBI:456216"/>
        <dbReference type="EC" id="7.2.2.9"/>
    </reaction>
</comment>
<comment type="activity regulation">
    <text evidence="4 5">Activated by Cu(2+) and to a lesser extent by Ag(+) and Cu(+).</text>
</comment>
<comment type="biophysicochemical properties">
    <phDependence>
        <text evidence="4 5">Optimum pH is 5.7.</text>
    </phDependence>
    <temperatureDependence>
        <text evidence="4 5">Optimum temperature is 85 degrees Celsius.</text>
    </temperatureDependence>
</comment>
<comment type="subcellular location">
    <subcellularLocation>
        <location evidence="7">Cell membrane</location>
        <topology evidence="7">Multi-pass membrane protein</topology>
    </subcellularLocation>
</comment>
<comment type="domain">
    <text>The histidine-N-terminal metal-binding domain (His-N-MBD) seems to have a regulatory role affecting the metal transport rate by controlling the metal release/dephosphorylation rates.</text>
</comment>
<comment type="similarity">
    <text evidence="7">Belongs to the cation transport ATPase (P-type) (TC 3.A.3) family. Type IB subfamily.</text>
</comment>
<protein>
    <recommendedName>
        <fullName>Copper-exporting P-type ATPase B</fullName>
        <ecNumber>7.2.2.9</ecNumber>
    </recommendedName>
</protein>
<sequence>MHEHDSHGEAAHSNSEDMQMIHQHHEHHGHEEEHSAHHEKMKHSADHGDHHRMMMEDFKKRFYVSTLLTIPILILSPAIQTFLGFRVEFAGSLYILFLLSSAVYFYGGYPFLKGIFDELRRRQPGMMTLIAVAISVAYFYSSAVVFGLKGKFFFWELATLIDIMLLGHYIEMRSVLGASRALEELVKIMPSEAHLLKDGEIVEVKVENLKPGDKVLVKPGEKIPVDGIVVEGESFVNEAMLTGESKPVAKKPGDTVIGGAINGEGSLVVEVEKTGKDTYLNQVIELVRQAQESKSRTQDLANRAALLLTVIALTVGSVTLAIWLAYIADFAFAIERAVTVMVITCPHALGLAIPLVVAVSTSLAAKSGLLIRDRQAFERAKDLQAVIFDKTGTLTEGRFGVTDIVGFNHSEDELLQIAASLEARSEHPIAAAIVEEAEKRGFGLTEVEEFRAIPGKGVEGIVNGRRYMVVSPGYIRELGIKTDESVEKLKQQGKTVVFILKNGEVSGVIALADRIRPESREAISKLKAIGIKCMMLTGDNRFVAKWVAEELGLDDYFAEVLPHEKAEKVKEVQQKYVTAMVGDGVNDAPALAQADVGIAIGAGTDVAVETADIVLVRNDPRDVAAIVELSRKTYSKMKQNLLWATGYNAFAIPLAAGVLYSAGILLSPAVGAILMSLSTVIVAINARLLR</sequence>
<proteinExistence type="evidence at protein level"/>
<accession>O30085</accession>
<gene>
    <name type="primary">copB</name>
    <name type="ordered locus">AF_0152</name>
</gene>
<dbReference type="EC" id="7.2.2.9"/>
<dbReference type="EMBL" id="AE000782">
    <property type="protein sequence ID" value="AAB91079.1"/>
    <property type="molecule type" value="Genomic_DNA"/>
</dbReference>
<dbReference type="PIR" id="H69268">
    <property type="entry name" value="H69268"/>
</dbReference>
<dbReference type="RefSeq" id="WP_010877664.1">
    <property type="nucleotide sequence ID" value="NC_000917.1"/>
</dbReference>
<dbReference type="PDB" id="3SKX">
    <property type="method" value="X-ray"/>
    <property type="resolution" value="1.59 A"/>
    <property type="chains" value="A=372-636"/>
</dbReference>
<dbReference type="PDB" id="3SKY">
    <property type="method" value="X-ray"/>
    <property type="resolution" value="2.10 A"/>
    <property type="chains" value="A=372-636"/>
</dbReference>
<dbReference type="PDBsum" id="3SKX"/>
<dbReference type="PDBsum" id="3SKY"/>
<dbReference type="SMR" id="O30085"/>
<dbReference type="STRING" id="224325.AF_0152"/>
<dbReference type="TCDB" id="3.A.3.5.10">
    <property type="family name" value="the p-type atpase (p-atpase) superfamily"/>
</dbReference>
<dbReference type="PaxDb" id="224325-AF_0152"/>
<dbReference type="EnsemblBacteria" id="AAB91079">
    <property type="protein sequence ID" value="AAB91079"/>
    <property type="gene ID" value="AF_0152"/>
</dbReference>
<dbReference type="KEGG" id="afu:AF_0152"/>
<dbReference type="eggNOG" id="arCOG01576">
    <property type="taxonomic scope" value="Archaea"/>
</dbReference>
<dbReference type="HOGENOM" id="CLU_001771_11_2_2"/>
<dbReference type="OrthoDB" id="8588at2157"/>
<dbReference type="PhylomeDB" id="O30085"/>
<dbReference type="BRENDA" id="7.2.2.9">
    <property type="organism ID" value="414"/>
</dbReference>
<dbReference type="EvolutionaryTrace" id="O30085"/>
<dbReference type="Proteomes" id="UP000002199">
    <property type="component" value="Chromosome"/>
</dbReference>
<dbReference type="GO" id="GO:0005886">
    <property type="term" value="C:plasma membrane"/>
    <property type="evidence" value="ECO:0007669"/>
    <property type="project" value="UniProtKB-SubCell"/>
</dbReference>
<dbReference type="GO" id="GO:0005524">
    <property type="term" value="F:ATP binding"/>
    <property type="evidence" value="ECO:0007669"/>
    <property type="project" value="UniProtKB-KW"/>
</dbReference>
<dbReference type="GO" id="GO:0016887">
    <property type="term" value="F:ATP hydrolysis activity"/>
    <property type="evidence" value="ECO:0007669"/>
    <property type="project" value="InterPro"/>
</dbReference>
<dbReference type="GO" id="GO:0005507">
    <property type="term" value="F:copper ion binding"/>
    <property type="evidence" value="ECO:0007669"/>
    <property type="project" value="TreeGrafter"/>
</dbReference>
<dbReference type="GO" id="GO:0043682">
    <property type="term" value="F:P-type divalent copper transporter activity"/>
    <property type="evidence" value="ECO:0007669"/>
    <property type="project" value="UniProtKB-EC"/>
</dbReference>
<dbReference type="GO" id="GO:0055070">
    <property type="term" value="P:copper ion homeostasis"/>
    <property type="evidence" value="ECO:0007669"/>
    <property type="project" value="TreeGrafter"/>
</dbReference>
<dbReference type="CDD" id="cd07552">
    <property type="entry name" value="P-type_ATPase_Cu-like"/>
    <property type="match status" value="1"/>
</dbReference>
<dbReference type="FunFam" id="2.70.150.10:FF:000020">
    <property type="entry name" value="Copper-exporting P-type ATPase A"/>
    <property type="match status" value="1"/>
</dbReference>
<dbReference type="Gene3D" id="3.40.1110.10">
    <property type="entry name" value="Calcium-transporting ATPase, cytoplasmic domain N"/>
    <property type="match status" value="1"/>
</dbReference>
<dbReference type="Gene3D" id="2.70.150.10">
    <property type="entry name" value="Calcium-transporting ATPase, cytoplasmic transduction domain A"/>
    <property type="match status" value="1"/>
</dbReference>
<dbReference type="Gene3D" id="3.40.50.1000">
    <property type="entry name" value="HAD superfamily/HAD-like"/>
    <property type="match status" value="1"/>
</dbReference>
<dbReference type="InterPro" id="IPR023299">
    <property type="entry name" value="ATPase_P-typ_cyto_dom_N"/>
</dbReference>
<dbReference type="InterPro" id="IPR018303">
    <property type="entry name" value="ATPase_P-typ_P_site"/>
</dbReference>
<dbReference type="InterPro" id="IPR023298">
    <property type="entry name" value="ATPase_P-typ_TM_dom_sf"/>
</dbReference>
<dbReference type="InterPro" id="IPR008250">
    <property type="entry name" value="ATPase_P-typ_transduc_dom_A_sf"/>
</dbReference>
<dbReference type="InterPro" id="IPR036412">
    <property type="entry name" value="HAD-like_sf"/>
</dbReference>
<dbReference type="InterPro" id="IPR023214">
    <property type="entry name" value="HAD_sf"/>
</dbReference>
<dbReference type="InterPro" id="IPR027256">
    <property type="entry name" value="P-typ_ATPase_IB"/>
</dbReference>
<dbReference type="InterPro" id="IPR001757">
    <property type="entry name" value="P_typ_ATPase"/>
</dbReference>
<dbReference type="InterPro" id="IPR044492">
    <property type="entry name" value="P_typ_ATPase_HD_dom"/>
</dbReference>
<dbReference type="NCBIfam" id="TIGR01511">
    <property type="entry name" value="ATPase-IB1_Cu"/>
    <property type="match status" value="1"/>
</dbReference>
<dbReference type="NCBIfam" id="TIGR01512">
    <property type="entry name" value="ATPase-IB2_Cd"/>
    <property type="match status" value="1"/>
</dbReference>
<dbReference type="NCBIfam" id="TIGR01525">
    <property type="entry name" value="ATPase-IB_hvy"/>
    <property type="match status" value="1"/>
</dbReference>
<dbReference type="NCBIfam" id="TIGR01494">
    <property type="entry name" value="ATPase_P-type"/>
    <property type="match status" value="1"/>
</dbReference>
<dbReference type="PANTHER" id="PTHR43520">
    <property type="entry name" value="ATP7, ISOFORM B"/>
    <property type="match status" value="1"/>
</dbReference>
<dbReference type="PANTHER" id="PTHR43520:SF8">
    <property type="entry name" value="P-TYPE CU(+) TRANSPORTER"/>
    <property type="match status" value="1"/>
</dbReference>
<dbReference type="Pfam" id="PF00122">
    <property type="entry name" value="E1-E2_ATPase"/>
    <property type="match status" value="1"/>
</dbReference>
<dbReference type="Pfam" id="PF00702">
    <property type="entry name" value="Hydrolase"/>
    <property type="match status" value="1"/>
</dbReference>
<dbReference type="PRINTS" id="PR00119">
    <property type="entry name" value="CATATPASE"/>
</dbReference>
<dbReference type="PRINTS" id="PR00120">
    <property type="entry name" value="HATPASE"/>
</dbReference>
<dbReference type="SFLD" id="SFLDG00002">
    <property type="entry name" value="C1.7:_P-type_atpase_like"/>
    <property type="match status" value="1"/>
</dbReference>
<dbReference type="SFLD" id="SFLDF00027">
    <property type="entry name" value="p-type_atpase"/>
    <property type="match status" value="1"/>
</dbReference>
<dbReference type="SUPFAM" id="SSF81653">
    <property type="entry name" value="Calcium ATPase, transduction domain A"/>
    <property type="match status" value="1"/>
</dbReference>
<dbReference type="SUPFAM" id="SSF81665">
    <property type="entry name" value="Calcium ATPase, transmembrane domain M"/>
    <property type="match status" value="1"/>
</dbReference>
<dbReference type="SUPFAM" id="SSF56784">
    <property type="entry name" value="HAD-like"/>
    <property type="match status" value="1"/>
</dbReference>
<dbReference type="PROSITE" id="PS00154">
    <property type="entry name" value="ATPASE_E1_E2"/>
    <property type="match status" value="1"/>
</dbReference>
<feature type="chain" id="PRO_0000350609" description="Copper-exporting P-type ATPase B">
    <location>
        <begin position="1"/>
        <end position="690"/>
    </location>
</feature>
<feature type="topological domain" description="Cytoplasmic" evidence="2">
    <location>
        <begin position="1"/>
        <end position="64"/>
    </location>
</feature>
<feature type="transmembrane region" description="Helical" evidence="2">
    <location>
        <begin position="65"/>
        <end position="85"/>
    </location>
</feature>
<feature type="topological domain" description="Extracellular" evidence="2">
    <location>
        <begin position="86"/>
        <end position="91"/>
    </location>
</feature>
<feature type="transmembrane region" description="Helical" evidence="2">
    <location>
        <begin position="92"/>
        <end position="112"/>
    </location>
</feature>
<feature type="topological domain" description="Cytoplasmic" evidence="2">
    <location>
        <begin position="113"/>
        <end position="127"/>
    </location>
</feature>
<feature type="transmembrane region" description="Helical" evidence="2">
    <location>
        <begin position="128"/>
        <end position="148"/>
    </location>
</feature>
<feature type="topological domain" description="Extracellular" evidence="2">
    <location>
        <begin position="149"/>
        <end position="151"/>
    </location>
</feature>
<feature type="transmembrane region" description="Helical" evidence="2">
    <location>
        <begin position="152"/>
        <end position="172"/>
    </location>
</feature>
<feature type="topological domain" description="Cytoplasmic" evidence="2">
    <location>
        <begin position="173"/>
        <end position="303"/>
    </location>
</feature>
<feature type="transmembrane region" description="Helical" evidence="2">
    <location>
        <begin position="304"/>
        <end position="324"/>
    </location>
</feature>
<feature type="topological domain" description="Extracellular" evidence="2">
    <location>
        <begin position="325"/>
        <end position="336"/>
    </location>
</feature>
<feature type="transmembrane region" description="Helical" evidence="2">
    <location>
        <begin position="337"/>
        <end position="357"/>
    </location>
</feature>
<feature type="topological domain" description="Cytoplasmic" evidence="2">
    <location>
        <begin position="358"/>
        <end position="640"/>
    </location>
</feature>
<feature type="transmembrane region" description="Helical" evidence="2">
    <location>
        <begin position="641"/>
        <end position="661"/>
    </location>
</feature>
<feature type="topological domain" description="Extracellular" evidence="2">
    <location>
        <begin position="662"/>
        <end position="663"/>
    </location>
</feature>
<feature type="transmembrane region" description="Helical" evidence="2">
    <location>
        <begin position="664"/>
        <end position="684"/>
    </location>
</feature>
<feature type="topological domain" description="Cytoplasmic" evidence="2">
    <location>
        <begin position="685"/>
        <end position="690"/>
    </location>
</feature>
<feature type="region of interest" description="Disordered" evidence="3">
    <location>
        <begin position="23"/>
        <end position="46"/>
    </location>
</feature>
<feature type="compositionally biased region" description="Basic and acidic residues" evidence="3">
    <location>
        <begin position="28"/>
        <end position="46"/>
    </location>
</feature>
<feature type="active site" description="4-aspartylphosphate intermediate" evidence="6">
    <location>
        <position position="389"/>
    </location>
</feature>
<feature type="binding site">
    <location>
        <begin position="390"/>
        <end position="391"/>
    </location>
    <ligand>
        <name>phosphate</name>
        <dbReference type="ChEBI" id="CHEBI:43474"/>
    </ligand>
</feature>
<feature type="binding site">
    <location>
        <begin position="537"/>
        <end position="538"/>
    </location>
    <ligand>
        <name>phosphate</name>
        <dbReference type="ChEBI" id="CHEBI:43474"/>
    </ligand>
</feature>
<feature type="binding site" evidence="6">
    <location>
        <position position="565"/>
    </location>
    <ligand>
        <name>phosphate</name>
        <dbReference type="ChEBI" id="CHEBI:43474"/>
    </ligand>
</feature>
<feature type="binding site" evidence="1">
    <location>
        <position position="583"/>
    </location>
    <ligand>
        <name>Mg(2+)</name>
        <dbReference type="ChEBI" id="CHEBI:18420"/>
    </ligand>
</feature>
<feature type="binding site" evidence="1">
    <location>
        <position position="587"/>
    </location>
    <ligand>
        <name>Mg(2+)</name>
        <dbReference type="ChEBI" id="CHEBI:18420"/>
    </ligand>
</feature>
<feature type="helix" evidence="8">
    <location>
        <begin position="376"/>
        <end position="379"/>
    </location>
</feature>
<feature type="helix" evidence="8">
    <location>
        <begin position="380"/>
        <end position="382"/>
    </location>
</feature>
<feature type="strand" evidence="8">
    <location>
        <begin position="385"/>
        <end position="389"/>
    </location>
</feature>
<feature type="helix" evidence="8">
    <location>
        <begin position="390"/>
        <end position="394"/>
    </location>
</feature>
<feature type="strand" evidence="8">
    <location>
        <begin position="395"/>
        <end position="409"/>
    </location>
</feature>
<feature type="helix" evidence="8">
    <location>
        <begin position="411"/>
        <end position="422"/>
    </location>
</feature>
<feature type="helix" evidence="8">
    <location>
        <begin position="428"/>
        <end position="439"/>
    </location>
</feature>
<feature type="strand" evidence="8">
    <location>
        <begin position="448"/>
        <end position="453"/>
    </location>
</feature>
<feature type="turn" evidence="8">
    <location>
        <begin position="454"/>
        <end position="456"/>
    </location>
</feature>
<feature type="strand" evidence="8">
    <location>
        <begin position="457"/>
        <end position="462"/>
    </location>
</feature>
<feature type="strand" evidence="8">
    <location>
        <begin position="465"/>
        <end position="470"/>
    </location>
</feature>
<feature type="helix" evidence="8">
    <location>
        <begin position="472"/>
        <end position="477"/>
    </location>
</feature>
<feature type="helix" evidence="8">
    <location>
        <begin position="486"/>
        <end position="490"/>
    </location>
</feature>
<feature type="turn" evidence="8">
    <location>
        <begin position="491"/>
        <end position="493"/>
    </location>
</feature>
<feature type="strand" evidence="8">
    <location>
        <begin position="495"/>
        <end position="501"/>
    </location>
</feature>
<feature type="strand" evidence="8">
    <location>
        <begin position="504"/>
        <end position="515"/>
    </location>
</feature>
<feature type="helix" evidence="8">
    <location>
        <begin position="519"/>
        <end position="528"/>
    </location>
</feature>
<feature type="strand" evidence="8">
    <location>
        <begin position="532"/>
        <end position="536"/>
    </location>
</feature>
<feature type="helix" evidence="8">
    <location>
        <begin position="541"/>
        <end position="551"/>
    </location>
</feature>
<feature type="strand" evidence="8">
    <location>
        <begin position="554"/>
        <end position="557"/>
    </location>
</feature>
<feature type="helix" evidence="8">
    <location>
        <begin position="562"/>
        <end position="564"/>
    </location>
</feature>
<feature type="helix" evidence="8">
    <location>
        <begin position="565"/>
        <end position="573"/>
    </location>
</feature>
<feature type="strand" evidence="8">
    <location>
        <begin position="578"/>
        <end position="582"/>
    </location>
</feature>
<feature type="turn" evidence="8">
    <location>
        <begin position="584"/>
        <end position="587"/>
    </location>
</feature>
<feature type="helix" evidence="8">
    <location>
        <begin position="588"/>
        <end position="593"/>
    </location>
</feature>
<feature type="strand" evidence="8">
    <location>
        <begin position="594"/>
        <end position="599"/>
    </location>
</feature>
<feature type="strand" evidence="8">
    <location>
        <begin position="604"/>
        <end position="606"/>
    </location>
</feature>
<feature type="strand" evidence="8">
    <location>
        <begin position="610"/>
        <end position="614"/>
    </location>
</feature>
<feature type="helix" evidence="8">
    <location>
        <begin position="622"/>
        <end position="631"/>
    </location>
</feature>
<reference key="1">
    <citation type="journal article" date="1997" name="Nature">
        <title>The complete genome sequence of the hyperthermophilic, sulphate-reducing archaeon Archaeoglobus fulgidus.</title>
        <authorList>
            <person name="Klenk H.-P."/>
            <person name="Clayton R.A."/>
            <person name="Tomb J.-F."/>
            <person name="White O."/>
            <person name="Nelson K.E."/>
            <person name="Ketchum K.A."/>
            <person name="Dodson R.J."/>
            <person name="Gwinn M.L."/>
            <person name="Hickey E.K."/>
            <person name="Peterson J.D."/>
            <person name="Richardson D.L."/>
            <person name="Kerlavage A.R."/>
            <person name="Graham D.E."/>
            <person name="Kyrpides N.C."/>
            <person name="Fleischmann R.D."/>
            <person name="Quackenbush J."/>
            <person name="Lee N.H."/>
            <person name="Sutton G.G."/>
            <person name="Gill S.R."/>
            <person name="Kirkness E.F."/>
            <person name="Dougherty B.A."/>
            <person name="McKenney K."/>
            <person name="Adams M.D."/>
            <person name="Loftus B.J."/>
            <person name="Peterson S.N."/>
            <person name="Reich C.I."/>
            <person name="McNeil L.K."/>
            <person name="Badger J.H."/>
            <person name="Glodek A."/>
            <person name="Zhou L."/>
            <person name="Overbeek R."/>
            <person name="Gocayne J.D."/>
            <person name="Weidman J.F."/>
            <person name="McDonald L.A."/>
            <person name="Utterback T.R."/>
            <person name="Cotton M.D."/>
            <person name="Spriggs T."/>
            <person name="Artiach P."/>
            <person name="Kaine B.P."/>
            <person name="Sykes S.M."/>
            <person name="Sadow P.W."/>
            <person name="D'Andrea K.P."/>
            <person name="Bowman C."/>
            <person name="Fujii C."/>
            <person name="Garland S.A."/>
            <person name="Mason T.M."/>
            <person name="Olsen G.J."/>
            <person name="Fraser C.M."/>
            <person name="Smith H.O."/>
            <person name="Woese C.R."/>
            <person name="Venter J.C."/>
        </authorList>
    </citation>
    <scope>NUCLEOTIDE SEQUENCE [LARGE SCALE GENOMIC DNA]</scope>
    <source>
        <strain>ATCC 49558 / DSM 4304 / JCM 9628 / NBRC 100126 / VC-16</strain>
    </source>
</reference>
<reference key="2">
    <citation type="journal article" date="2003" name="Ann. N. Y. Acad. Sci.">
        <title>Heavy metal transport CPx-ATPases from the thermophile Archaeoglobus fulgidus.</title>
        <authorList>
            <person name="Arguello J.M."/>
            <person name="Mandal A.K."/>
            <person name="Mana-Capelli S."/>
        </authorList>
    </citation>
    <scope>CHARACTERIZATION</scope>
    <scope>ATPASE ACTIVITY</scope>
    <scope>ACTIVITY REGULATION</scope>
    <scope>BIOPHYSICOCHEMICAL PROPERTIES</scope>
</reference>
<reference key="3">
    <citation type="journal article" date="2003" name="J. Biol. Chem.">
        <title>Archaeoglobus fulgidus CopB is a thermophilic Cu2+-ATPase: functional role of its histidine-rich-N-terminal metal binding domain.</title>
        <authorList>
            <person name="Mana-Capelli S."/>
            <person name="Mandal A.K."/>
            <person name="Arguello J.M."/>
        </authorList>
    </citation>
    <scope>FUNCTION AS A COPPER ATPASE</scope>
    <scope>ACTIVITY REGULATION</scope>
    <scope>BIOPHYSICOCHEMICAL PROPERTIES</scope>
</reference>
<reference key="4">
    <citation type="journal article" date="2012" name="Biosci. Rep.">
        <title>Conformations of the apo-, substrate-bound and phosphate-bound ATP-binding domain of the Cu(II) ATPase CopB illustrate coupling of domain movement to the catalytic cycle.</title>
        <authorList>
            <person name="Jayakanthan S."/>
            <person name="Roberts S.A."/>
            <person name="Weichsel A."/>
            <person name="Arguello J.M."/>
            <person name="McEvoy M.M."/>
        </authorList>
    </citation>
    <scope>X-RAY CRYSTALLOGRAPHY (1.59 ANGSTROMS) OF 372-636 OF APOENZYME AND IN COMPLEX WITH PHOSPHATE</scope>
    <scope>FUNCTION</scope>
    <scope>ACTIVE SITE</scope>
</reference>
<name>COPB_ARCFU</name>